<gene>
    <name type="primary">ply</name>
    <name type="ordered locus">SP_1923</name>
</gene>
<proteinExistence type="evidence at protein level"/>
<sequence length="471" mass="52898">MANKAVNDFILAMNYDKKKLLTHQGESIENRFIKEGNQLPDEFVVIERKKRSLSTNTSDISVTATNDSRLYPGALLVVDETLLENNPTLLAVDRAPMTYSIDLPGLASSDSFLQVEDPSNSSVRGAVNDLLAKWHQDYGQVNNVPARMQYEKITAHSMEQLKVKFGSDFEKTGNSLDIDFNSVHSGEKQIQIVNFKQIYYTVSVDAVKNPGDVFQDTVTVEDLKQRGISAERPLVYISSVAYGRQVYLKLETTSKSDEVEAAFEALIKGVKVAPQTEWKQILDNTEVKAVILGGDPSSGARVVTGKVDMVEDLIQEGSRFTADHPGLPISYTTSFLRDNVVATFQNSTDYVETKVTAYRNGDLLLDHSGAYVAQYYITWNELSYDHQGKEVLTPKAWDRNGQDLTAHFTTSIPLKGNVRNLSVKIRECTGLAWEWWRTVYEKTDLPLVRKRTISIWGTTLYPQVEDKVEND</sequence>
<protein>
    <recommendedName>
        <fullName>Pneumolysin</fullName>
        <shortName>PLY</shortName>
    </recommendedName>
    <alternativeName>
        <fullName>Thiol-activated cytolysin</fullName>
    </alternativeName>
</protein>
<dbReference type="EMBL" id="AE005672">
    <property type="protein sequence ID" value="AAK75991.1"/>
    <property type="molecule type" value="Genomic_DNA"/>
</dbReference>
<dbReference type="PIR" id="A28568">
    <property type="entry name" value="A28568"/>
</dbReference>
<dbReference type="PIR" id="A99089">
    <property type="entry name" value="A99089"/>
</dbReference>
<dbReference type="RefSeq" id="WP_001284361.1">
    <property type="nucleotide sequence ID" value="NZ_CP155539.1"/>
</dbReference>
<dbReference type="SMR" id="P0C2J9"/>
<dbReference type="ChEMBL" id="CHEMBL5117"/>
<dbReference type="TCDB" id="1.C.12.1.5">
    <property type="family name" value="the thiol-activated cholesterol-dependent cytolysin (cdc) family"/>
</dbReference>
<dbReference type="PaxDb" id="170187-SP_1923"/>
<dbReference type="EnsemblBacteria" id="AAK75991">
    <property type="protein sequence ID" value="AAK75991"/>
    <property type="gene ID" value="SP_1923"/>
</dbReference>
<dbReference type="GeneID" id="45652855"/>
<dbReference type="KEGG" id="spn:SP_1923"/>
<dbReference type="eggNOG" id="ENOG502Z7ST">
    <property type="taxonomic scope" value="Bacteria"/>
</dbReference>
<dbReference type="BioCyc" id="SPNE170187:G1FZB-1978-MONOMER"/>
<dbReference type="PRO" id="PR:P0C2J9"/>
<dbReference type="Proteomes" id="UP000000585">
    <property type="component" value="Chromosome"/>
</dbReference>
<dbReference type="GO" id="GO:0005576">
    <property type="term" value="C:extracellular region"/>
    <property type="evidence" value="ECO:0007669"/>
    <property type="project" value="UniProtKB-SubCell"/>
</dbReference>
<dbReference type="GO" id="GO:0020002">
    <property type="term" value="C:host cell plasma membrane"/>
    <property type="evidence" value="ECO:0007669"/>
    <property type="project" value="UniProtKB-SubCell"/>
</dbReference>
<dbReference type="GO" id="GO:0016020">
    <property type="term" value="C:membrane"/>
    <property type="evidence" value="ECO:0007669"/>
    <property type="project" value="UniProtKB-KW"/>
</dbReference>
<dbReference type="GO" id="GO:0015485">
    <property type="term" value="F:cholesterol binding"/>
    <property type="evidence" value="ECO:0007669"/>
    <property type="project" value="InterPro"/>
</dbReference>
<dbReference type="GO" id="GO:0090729">
    <property type="term" value="F:toxin activity"/>
    <property type="evidence" value="ECO:0007669"/>
    <property type="project" value="UniProtKB-KW"/>
</dbReference>
<dbReference type="GO" id="GO:0031640">
    <property type="term" value="P:killing of cells of another organism"/>
    <property type="evidence" value="ECO:0007669"/>
    <property type="project" value="UniProtKB-KW"/>
</dbReference>
<dbReference type="FunFam" id="2.60.40.1430:FF:000001">
    <property type="entry name" value="Thiol-activated cytolysin"/>
    <property type="match status" value="1"/>
</dbReference>
<dbReference type="Gene3D" id="3.30.1040.20">
    <property type="match status" value="1"/>
</dbReference>
<dbReference type="Gene3D" id="3.40.30.40">
    <property type="entry name" value="Perfringolysin"/>
    <property type="match status" value="1"/>
</dbReference>
<dbReference type="Gene3D" id="2.60.40.1430">
    <property type="entry name" value="Perfringolysin, domain 4"/>
    <property type="match status" value="1"/>
</dbReference>
<dbReference type="Gene3D" id="3.90.840.10">
    <property type="entry name" value="Thiol-activated cytolysin superfamily/Thiol-activated cytolysin, alpha-beta domain"/>
    <property type="match status" value="1"/>
</dbReference>
<dbReference type="InterPro" id="IPR035390">
    <property type="entry name" value="Thiol_cytolys_C"/>
</dbReference>
<dbReference type="InterPro" id="IPR038700">
    <property type="entry name" value="Thiol_cytolys_C_sf"/>
</dbReference>
<dbReference type="InterPro" id="IPR001869">
    <property type="entry name" value="Thiol_cytolysin"/>
</dbReference>
<dbReference type="InterPro" id="IPR036363">
    <property type="entry name" value="Thiol_cytolysin_ab_sf"/>
</dbReference>
<dbReference type="InterPro" id="IPR036359">
    <property type="entry name" value="Thiol_cytolysin_sf"/>
</dbReference>
<dbReference type="Pfam" id="PF17440">
    <property type="entry name" value="Thiol_cytolys_C"/>
    <property type="match status" value="1"/>
</dbReference>
<dbReference type="Pfam" id="PF01289">
    <property type="entry name" value="Thiol_cytolysin"/>
    <property type="match status" value="1"/>
</dbReference>
<dbReference type="PRINTS" id="PR01400">
    <property type="entry name" value="TACYTOLYSIN"/>
</dbReference>
<dbReference type="SUPFAM" id="SSF56978">
    <property type="entry name" value="Perfringolysin"/>
    <property type="match status" value="1"/>
</dbReference>
<dbReference type="PROSITE" id="PS00481">
    <property type="entry name" value="THIOL_CYTOLYSINS"/>
    <property type="match status" value="1"/>
</dbReference>
<keyword id="KW-0134">Cell wall</keyword>
<keyword id="KW-0204">Cytolysis</keyword>
<keyword id="KW-0354">Hemolysis</keyword>
<keyword id="KW-1032">Host cell membrane</keyword>
<keyword id="KW-1043">Host membrane</keyword>
<keyword id="KW-0446">Lipid-binding</keyword>
<keyword id="KW-0472">Membrane</keyword>
<keyword id="KW-1185">Reference proteome</keyword>
<keyword id="KW-0964">Secreted</keyword>
<keyword id="KW-0800">Toxin</keyword>
<keyword id="KW-0812">Transmembrane</keyword>
<keyword id="KW-1134">Transmembrane beta strand</keyword>
<keyword id="KW-0843">Virulence</keyword>
<evidence type="ECO:0000250" key="1"/>
<evidence type="ECO:0000250" key="2">
    <source>
        <dbReference type="UniProtKB" id="P0C2E9"/>
    </source>
</evidence>
<evidence type="ECO:0000250" key="3">
    <source>
        <dbReference type="UniProtKB" id="Q04IN8"/>
    </source>
</evidence>
<evidence type="ECO:0000269" key="4">
    <source>
    </source>
</evidence>
<evidence type="ECO:0000305" key="5"/>
<evidence type="ECO:0000305" key="6">
    <source>
    </source>
</evidence>
<organism>
    <name type="scientific">Streptococcus pneumoniae serotype 4 (strain ATCC BAA-334 / TIGR4)</name>
    <dbReference type="NCBI Taxonomy" id="170187"/>
    <lineage>
        <taxon>Bacteria</taxon>
        <taxon>Bacillati</taxon>
        <taxon>Bacillota</taxon>
        <taxon>Bacilli</taxon>
        <taxon>Lactobacillales</taxon>
        <taxon>Streptococcaceae</taxon>
        <taxon>Streptococcus</taxon>
    </lineage>
</organism>
<accession>P0C2J9</accession>
<accession>P11990</accession>
<name>TACY_STRPN</name>
<feature type="initiator methionine" description="Removed" evidence="3">
    <location>
        <position position="1"/>
    </location>
</feature>
<feature type="chain" id="PRO_0000204251" description="Pneumolysin">
    <location>
        <begin position="2"/>
        <end position="471"/>
    </location>
</feature>
<feature type="transmembrane region" description="Beta stranded" evidence="3">
    <location>
        <begin position="158"/>
        <end position="171"/>
    </location>
</feature>
<feature type="transmembrane region" description="Beta stranded" evidence="3">
    <location>
        <begin position="178"/>
        <end position="187"/>
    </location>
</feature>
<feature type="transmembrane region" description="Beta stranded" evidence="3">
    <location>
        <begin position="256"/>
        <end position="265"/>
    </location>
</feature>
<feature type="transmembrane region" description="Beta stranded" evidence="3">
    <location>
        <begin position="273"/>
        <end position="285"/>
    </location>
</feature>
<feature type="short sequence motif" description="Conserved undecapeptide" evidence="5">
    <location>
        <begin position="427"/>
        <end position="437"/>
    </location>
</feature>
<feature type="short sequence motif" description="Cholesterol binding" evidence="2">
    <location>
        <begin position="459"/>
        <end position="460"/>
    </location>
</feature>
<feature type="mutagenesis site" description="70% reduction in host cell hemolytic activity, no change in apparent molecular weight." evidence="4">
    <original>T</original>
    <variation>A</variation>
    <location>
        <position position="63"/>
    </location>
</feature>
<reference key="1">
    <citation type="journal article" date="2001" name="Science">
        <title>Complete genome sequence of a virulent isolate of Streptococcus pneumoniae.</title>
        <authorList>
            <person name="Tettelin H."/>
            <person name="Nelson K.E."/>
            <person name="Paulsen I.T."/>
            <person name="Eisen J.A."/>
            <person name="Read T.D."/>
            <person name="Peterson S.N."/>
            <person name="Heidelberg J.F."/>
            <person name="DeBoy R.T."/>
            <person name="Haft D.H."/>
            <person name="Dodson R.J."/>
            <person name="Durkin A.S."/>
            <person name="Gwinn M.L."/>
            <person name="Kolonay J.F."/>
            <person name="Nelson W.C."/>
            <person name="Peterson J.D."/>
            <person name="Umayam L.A."/>
            <person name="White O."/>
            <person name="Salzberg S.L."/>
            <person name="Lewis M.R."/>
            <person name="Radune D."/>
            <person name="Holtzapple E.K."/>
            <person name="Khouri H.M."/>
            <person name="Wolf A.M."/>
            <person name="Utterback T.R."/>
            <person name="Hansen C.L."/>
            <person name="McDonald L.A."/>
            <person name="Feldblyum T.V."/>
            <person name="Angiuoli S.V."/>
            <person name="Dickinson T."/>
            <person name="Hickey E.K."/>
            <person name="Holt I.E."/>
            <person name="Loftus B.J."/>
            <person name="Yang F."/>
            <person name="Smith H.O."/>
            <person name="Venter J.C."/>
            <person name="Dougherty B.A."/>
            <person name="Morrison D.A."/>
            <person name="Hollingshead S.K."/>
            <person name="Fraser C.M."/>
        </authorList>
    </citation>
    <scope>NUCLEOTIDE SEQUENCE [LARGE SCALE GENOMIC DNA]</scope>
    <source>
        <strain>ATCC BAA-334 / TIGR4</strain>
    </source>
</reference>
<reference key="2">
    <citation type="journal article" date="2017" name="Microbes Infect.">
        <title>The accessory Sec system (SecY2A2) in Streptococcus pneumoniae is involved in export of pneumolysin toxin, adhesion and biofilm formation.</title>
        <authorList>
            <person name="Bandara M."/>
            <person name="Skehel J.M."/>
            <person name="Kadioglu A."/>
            <person name="Collinson I."/>
            <person name="Nobbs A.H."/>
            <person name="Blocker A.J."/>
            <person name="Jenkinson H.F."/>
        </authorList>
    </citation>
    <scope>FUNCTION</scope>
    <scope>SUBCELLULAR LOCATION</scope>
    <scope>DISRUPTION PHENOTYPE</scope>
    <scope>MUTAGENESIS OF THR-63</scope>
    <source>
        <strain>ATCC BAA-334 / TIGR4</strain>
    </source>
</reference>
<comment type="function">
    <text evidence="2 6">A cholesterol-dependent toxin that causes cytolysis by forming pores in cholesterol containing host membranes (Probable). After binding to target membranes, the protein undergoes a major conformation change, leading to its insertion in the host membrane and formation of an oligomeric pore complex. Cholesterol is required for binding to host membranes, membrane insertion and pore formation; cholesterol binding is mediated by a Thr-Leu pair in the C-terminus. Can be reversibly inactivated by oxidation.</text>
</comment>
<comment type="subunit">
    <text evidence="3">Homooligomeric pore complex of 35 to 50 subunits; when inserted in the host membrane.</text>
</comment>
<comment type="subcellular location">
    <subcellularLocation>
        <location evidence="4">Secreted</location>
    </subcellularLocation>
    <subcellularLocation>
        <location evidence="4">Secreted</location>
        <location evidence="4">Cell wall</location>
    </subcellularLocation>
    <subcellularLocation>
        <location evidence="1">Host cell membrane</location>
        <topology evidence="3">Multi-pass membrane protein</topology>
    </subcellularLocation>
    <text evidence="3 4">Secreted as soluble protein by the accessory Sec system (PubMed:28456649). It then inserts into the host cell membrane and forms pores formed by transmembrane beta-strands (By similarity).</text>
</comment>
<comment type="PTM">
    <text evidence="4">Has a slightly altered apparent molecular weight in a secA2 deletion mutant, but no post-translational modifications have been found.</text>
</comment>
<comment type="disruption phenotype">
    <text evidence="4">No change in biofilm formation, about 35% decreased adherence to human lung pneumocytes. Complete loss of host cell hemolytic activity.</text>
</comment>
<comment type="similarity">
    <text evidence="5">Belongs to the cholesterol-dependent cytolysin family.</text>
</comment>